<reference key="1">
    <citation type="journal article" date="2008" name="J. Bacteriol.">
        <title>The pangenome structure of Escherichia coli: comparative genomic analysis of E. coli commensal and pathogenic isolates.</title>
        <authorList>
            <person name="Rasko D.A."/>
            <person name="Rosovitz M.J."/>
            <person name="Myers G.S.A."/>
            <person name="Mongodin E.F."/>
            <person name="Fricke W.F."/>
            <person name="Gajer P."/>
            <person name="Crabtree J."/>
            <person name="Sebaihia M."/>
            <person name="Thomson N.R."/>
            <person name="Chaudhuri R."/>
            <person name="Henderson I.R."/>
            <person name="Sperandio V."/>
            <person name="Ravel J."/>
        </authorList>
    </citation>
    <scope>NUCLEOTIDE SEQUENCE [LARGE SCALE GENOMIC DNA]</scope>
    <source>
        <strain>HS</strain>
    </source>
</reference>
<keyword id="KW-0227">DNA damage</keyword>
<keyword id="KW-0234">DNA repair</keyword>
<feature type="chain" id="PRO_1000058141" description="DNA mismatch repair protein MutL">
    <location>
        <begin position="1"/>
        <end position="615"/>
    </location>
</feature>
<feature type="region of interest" description="Disordered" evidence="2">
    <location>
        <begin position="363"/>
        <end position="397"/>
    </location>
</feature>
<feature type="compositionally biased region" description="Low complexity" evidence="2">
    <location>
        <begin position="364"/>
        <end position="391"/>
    </location>
</feature>
<gene>
    <name evidence="1" type="primary">mutL</name>
    <name type="ordered locus">EcHS_A4412</name>
</gene>
<dbReference type="EMBL" id="CP000802">
    <property type="protein sequence ID" value="ABV08568.1"/>
    <property type="molecule type" value="Genomic_DNA"/>
</dbReference>
<dbReference type="RefSeq" id="WP_001122507.1">
    <property type="nucleotide sequence ID" value="NC_009800.1"/>
</dbReference>
<dbReference type="SMR" id="A8A7R4"/>
<dbReference type="GeneID" id="75202404"/>
<dbReference type="KEGG" id="ecx:EcHS_A4412"/>
<dbReference type="HOGENOM" id="CLU_004131_5_1_6"/>
<dbReference type="GO" id="GO:0032300">
    <property type="term" value="C:mismatch repair complex"/>
    <property type="evidence" value="ECO:0007669"/>
    <property type="project" value="InterPro"/>
</dbReference>
<dbReference type="GO" id="GO:0005524">
    <property type="term" value="F:ATP binding"/>
    <property type="evidence" value="ECO:0007669"/>
    <property type="project" value="InterPro"/>
</dbReference>
<dbReference type="GO" id="GO:0016887">
    <property type="term" value="F:ATP hydrolysis activity"/>
    <property type="evidence" value="ECO:0007669"/>
    <property type="project" value="InterPro"/>
</dbReference>
<dbReference type="GO" id="GO:0140664">
    <property type="term" value="F:ATP-dependent DNA damage sensor activity"/>
    <property type="evidence" value="ECO:0007669"/>
    <property type="project" value="InterPro"/>
</dbReference>
<dbReference type="GO" id="GO:0030983">
    <property type="term" value="F:mismatched DNA binding"/>
    <property type="evidence" value="ECO:0007669"/>
    <property type="project" value="InterPro"/>
</dbReference>
<dbReference type="GO" id="GO:0006298">
    <property type="term" value="P:mismatch repair"/>
    <property type="evidence" value="ECO:0007669"/>
    <property type="project" value="UniProtKB-UniRule"/>
</dbReference>
<dbReference type="CDD" id="cd16926">
    <property type="entry name" value="HATPase_MutL-MLH-PMS-like"/>
    <property type="match status" value="1"/>
</dbReference>
<dbReference type="CDD" id="cd03482">
    <property type="entry name" value="MutL_Trans_MutL"/>
    <property type="match status" value="1"/>
</dbReference>
<dbReference type="FunFam" id="3.30.230.10:FF:000013">
    <property type="entry name" value="DNA mismatch repair endonuclease MutL"/>
    <property type="match status" value="1"/>
</dbReference>
<dbReference type="FunFam" id="3.30.565.10:FF:000003">
    <property type="entry name" value="DNA mismatch repair endonuclease MutL"/>
    <property type="match status" value="1"/>
</dbReference>
<dbReference type="FunFam" id="3.30.1370.100:FF:000002">
    <property type="entry name" value="DNA mismatch repair protein MutL"/>
    <property type="match status" value="1"/>
</dbReference>
<dbReference type="Gene3D" id="3.30.230.10">
    <property type="match status" value="1"/>
</dbReference>
<dbReference type="Gene3D" id="3.30.565.10">
    <property type="entry name" value="Histidine kinase-like ATPase, C-terminal domain"/>
    <property type="match status" value="1"/>
</dbReference>
<dbReference type="Gene3D" id="3.30.1540.20">
    <property type="entry name" value="MutL, C-terminal domain, dimerisation subdomain"/>
    <property type="match status" value="1"/>
</dbReference>
<dbReference type="Gene3D" id="3.30.1370.100">
    <property type="entry name" value="MutL, C-terminal domain, regulatory subdomain"/>
    <property type="match status" value="1"/>
</dbReference>
<dbReference type="HAMAP" id="MF_00149">
    <property type="entry name" value="DNA_mis_repair"/>
    <property type="match status" value="1"/>
</dbReference>
<dbReference type="InterPro" id="IPR014762">
    <property type="entry name" value="DNA_mismatch_repair_CS"/>
</dbReference>
<dbReference type="InterPro" id="IPR020667">
    <property type="entry name" value="DNA_mismatch_repair_MutL"/>
</dbReference>
<dbReference type="InterPro" id="IPR013507">
    <property type="entry name" value="DNA_mismatch_S5_2-like"/>
</dbReference>
<dbReference type="InterPro" id="IPR036890">
    <property type="entry name" value="HATPase_C_sf"/>
</dbReference>
<dbReference type="InterPro" id="IPR002099">
    <property type="entry name" value="MutL/Mlh/PMS"/>
</dbReference>
<dbReference type="InterPro" id="IPR038973">
    <property type="entry name" value="MutL/Mlh/Pms-like"/>
</dbReference>
<dbReference type="InterPro" id="IPR014790">
    <property type="entry name" value="MutL_C"/>
</dbReference>
<dbReference type="InterPro" id="IPR042120">
    <property type="entry name" value="MutL_C_dimsub"/>
</dbReference>
<dbReference type="InterPro" id="IPR042121">
    <property type="entry name" value="MutL_C_regsub"/>
</dbReference>
<dbReference type="InterPro" id="IPR037198">
    <property type="entry name" value="MutL_C_sf"/>
</dbReference>
<dbReference type="InterPro" id="IPR020568">
    <property type="entry name" value="Ribosomal_Su5_D2-typ_SF"/>
</dbReference>
<dbReference type="InterPro" id="IPR014721">
    <property type="entry name" value="Ribsml_uS5_D2-typ_fold_subgr"/>
</dbReference>
<dbReference type="NCBIfam" id="TIGR00585">
    <property type="entry name" value="mutl"/>
    <property type="match status" value="1"/>
</dbReference>
<dbReference type="NCBIfam" id="NF000948">
    <property type="entry name" value="PRK00095.1-1"/>
    <property type="match status" value="1"/>
</dbReference>
<dbReference type="PANTHER" id="PTHR10073">
    <property type="entry name" value="DNA MISMATCH REPAIR PROTEIN MLH, PMS, MUTL"/>
    <property type="match status" value="1"/>
</dbReference>
<dbReference type="PANTHER" id="PTHR10073:SF12">
    <property type="entry name" value="DNA MISMATCH REPAIR PROTEIN MLH1"/>
    <property type="match status" value="1"/>
</dbReference>
<dbReference type="Pfam" id="PF01119">
    <property type="entry name" value="DNA_mis_repair"/>
    <property type="match status" value="1"/>
</dbReference>
<dbReference type="Pfam" id="PF13589">
    <property type="entry name" value="HATPase_c_3"/>
    <property type="match status" value="1"/>
</dbReference>
<dbReference type="Pfam" id="PF08676">
    <property type="entry name" value="MutL_C"/>
    <property type="match status" value="1"/>
</dbReference>
<dbReference type="SMART" id="SM01340">
    <property type="entry name" value="DNA_mis_repair"/>
    <property type="match status" value="1"/>
</dbReference>
<dbReference type="SMART" id="SM00853">
    <property type="entry name" value="MutL_C"/>
    <property type="match status" value="1"/>
</dbReference>
<dbReference type="SUPFAM" id="SSF55874">
    <property type="entry name" value="ATPase domain of HSP90 chaperone/DNA topoisomerase II/histidine kinase"/>
    <property type="match status" value="1"/>
</dbReference>
<dbReference type="SUPFAM" id="SSF118116">
    <property type="entry name" value="DNA mismatch repair protein MutL"/>
    <property type="match status" value="1"/>
</dbReference>
<dbReference type="SUPFAM" id="SSF54211">
    <property type="entry name" value="Ribosomal protein S5 domain 2-like"/>
    <property type="match status" value="1"/>
</dbReference>
<dbReference type="PROSITE" id="PS00058">
    <property type="entry name" value="DNA_MISMATCH_REPAIR_1"/>
    <property type="match status" value="1"/>
</dbReference>
<name>MUTL_ECOHS</name>
<proteinExistence type="inferred from homology"/>
<accession>A8A7R4</accession>
<evidence type="ECO:0000255" key="1">
    <source>
        <dbReference type="HAMAP-Rule" id="MF_00149"/>
    </source>
</evidence>
<evidence type="ECO:0000256" key="2">
    <source>
        <dbReference type="SAM" id="MobiDB-lite"/>
    </source>
</evidence>
<comment type="function">
    <text evidence="1">This protein is involved in the repair of mismatches in DNA. It is required for dam-dependent methyl-directed DNA mismatch repair. May act as a 'molecular matchmaker', a protein that promotes the formation of a stable complex between two or more DNA-binding proteins in an ATP-dependent manner without itself being part of a final effector complex.</text>
</comment>
<comment type="similarity">
    <text evidence="1">Belongs to the DNA mismatch repair MutL/HexB family.</text>
</comment>
<protein>
    <recommendedName>
        <fullName evidence="1">DNA mismatch repair protein MutL</fullName>
    </recommendedName>
</protein>
<organism>
    <name type="scientific">Escherichia coli O9:H4 (strain HS)</name>
    <dbReference type="NCBI Taxonomy" id="331112"/>
    <lineage>
        <taxon>Bacteria</taxon>
        <taxon>Pseudomonadati</taxon>
        <taxon>Pseudomonadota</taxon>
        <taxon>Gammaproteobacteria</taxon>
        <taxon>Enterobacterales</taxon>
        <taxon>Enterobacteriaceae</taxon>
        <taxon>Escherichia</taxon>
    </lineage>
</organism>
<sequence>MPIQVLPPQLANQIAAGEVVERPASVVKELVENSLDAGATRIDIDIERGGAKLIRIRDNGCGIKKDELALALARHATSKIASLDDLEAIISLGFRGEALASISSVSRLTLTSRTAEQQEAWQAYAEGRDMNVTVKPAAHPVGTTLEVLDLFYNTPARRKFLRTEKTEFNHIDEIIRRIALARFDVTINLSHNGKIVRQYRAVPEGGQKERRLGAICGTAFLEQALAIEWQHGDLTLRGWVADPNHTTPALAEIQYCYVNGRMMRDRLINHAIRQACEDKLGADQQPAFVLYLEIDPHQVDVNVHPAKHEVRFHQSRLVHDFIYQGVLSVLQQQLETPLPLDDEPQPAPRSIPENRVAAGRNHFAEPAAREPVAPRYTPAPASGSRPAAPWPNAQPGYQKQQGEVYRQLLQTPAPMQKPKAPEPQEPALAANSQSFGRVLTIVHSDCALLERDGNISLLSLPVAERWLRQAQLTPGEAPVCAQPLLIPLRLKVSAEEKSALEKAQSALAELGIDFQSDAQHVTIRAVPLPLRQQNLQILIPELIGYLAKQSVFEPGNIAQWIARNLMSEHAQWSMAQAITLLADVERLCPQLVKTPPGGLLQSVDLHPAIKALKDE</sequence>